<organism>
    <name type="scientific">Enterobacter sp. (strain 638)</name>
    <dbReference type="NCBI Taxonomy" id="399742"/>
    <lineage>
        <taxon>Bacteria</taxon>
        <taxon>Pseudomonadati</taxon>
        <taxon>Pseudomonadota</taxon>
        <taxon>Gammaproteobacteria</taxon>
        <taxon>Enterobacterales</taxon>
        <taxon>Enterobacteriaceae</taxon>
        <taxon>Enterobacter</taxon>
    </lineage>
</organism>
<accession>A4WFZ2</accession>
<reference key="1">
    <citation type="journal article" date="2010" name="PLoS Genet.">
        <title>Genome sequence of the plant growth promoting endophytic bacterium Enterobacter sp. 638.</title>
        <authorList>
            <person name="Taghavi S."/>
            <person name="van der Lelie D."/>
            <person name="Hoffman A."/>
            <person name="Zhang Y.B."/>
            <person name="Walla M.D."/>
            <person name="Vangronsveld J."/>
            <person name="Newman L."/>
            <person name="Monchy S."/>
        </authorList>
    </citation>
    <scope>NUCLEOTIDE SEQUENCE [LARGE SCALE GENOMIC DNA]</scope>
    <source>
        <strain>638</strain>
    </source>
</reference>
<proteinExistence type="inferred from homology"/>
<gene>
    <name evidence="1" type="primary">metE</name>
    <name type="ordered locus">Ent638_3967</name>
</gene>
<keyword id="KW-0028">Amino-acid biosynthesis</keyword>
<keyword id="KW-0479">Metal-binding</keyword>
<keyword id="KW-0486">Methionine biosynthesis</keyword>
<keyword id="KW-0489">Methyltransferase</keyword>
<keyword id="KW-0677">Repeat</keyword>
<keyword id="KW-0808">Transferase</keyword>
<keyword id="KW-0862">Zinc</keyword>
<name>METE_ENT38</name>
<comment type="function">
    <text evidence="1">Catalyzes the transfer of a methyl group from 5-methyltetrahydrofolate to homocysteine resulting in methionine formation.</text>
</comment>
<comment type="catalytic activity">
    <reaction evidence="1">
        <text>5-methyltetrahydropteroyltri-L-glutamate + L-homocysteine = tetrahydropteroyltri-L-glutamate + L-methionine</text>
        <dbReference type="Rhea" id="RHEA:21196"/>
        <dbReference type="ChEBI" id="CHEBI:57844"/>
        <dbReference type="ChEBI" id="CHEBI:58140"/>
        <dbReference type="ChEBI" id="CHEBI:58199"/>
        <dbReference type="ChEBI" id="CHEBI:58207"/>
        <dbReference type="EC" id="2.1.1.14"/>
    </reaction>
</comment>
<comment type="cofactor">
    <cofactor evidence="1">
        <name>Zn(2+)</name>
        <dbReference type="ChEBI" id="CHEBI:29105"/>
    </cofactor>
    <text evidence="1">Binds 1 zinc ion per subunit.</text>
</comment>
<comment type="pathway">
    <text evidence="1">Amino-acid biosynthesis; L-methionine biosynthesis via de novo pathway; L-methionine from L-homocysteine (MetE route): step 1/1.</text>
</comment>
<comment type="similarity">
    <text evidence="1">Belongs to the vitamin-B12 independent methionine synthase family.</text>
</comment>
<protein>
    <recommendedName>
        <fullName evidence="1">5-methyltetrahydropteroyltriglutamate--homocysteine methyltransferase</fullName>
        <ecNumber evidence="1">2.1.1.14</ecNumber>
    </recommendedName>
    <alternativeName>
        <fullName evidence="1">Cobalamin-independent methionine synthase</fullName>
    </alternativeName>
    <alternativeName>
        <fullName evidence="1">Methionine synthase, vitamin-B12 independent isozyme</fullName>
    </alternativeName>
</protein>
<evidence type="ECO:0000255" key="1">
    <source>
        <dbReference type="HAMAP-Rule" id="MF_00172"/>
    </source>
</evidence>
<feature type="chain" id="PRO_1000058315" description="5-methyltetrahydropteroyltriglutamate--homocysteine methyltransferase">
    <location>
        <begin position="1"/>
        <end position="753"/>
    </location>
</feature>
<feature type="active site" description="Proton donor" evidence="1">
    <location>
        <position position="694"/>
    </location>
</feature>
<feature type="binding site" evidence="1">
    <location>
        <begin position="17"/>
        <end position="20"/>
    </location>
    <ligand>
        <name>5-methyltetrahydropteroyltri-L-glutamate</name>
        <dbReference type="ChEBI" id="CHEBI:58207"/>
    </ligand>
</feature>
<feature type="binding site" evidence="1">
    <location>
        <position position="117"/>
    </location>
    <ligand>
        <name>5-methyltetrahydropteroyltri-L-glutamate</name>
        <dbReference type="ChEBI" id="CHEBI:58207"/>
    </ligand>
</feature>
<feature type="binding site" evidence="1">
    <location>
        <begin position="431"/>
        <end position="433"/>
    </location>
    <ligand>
        <name>L-homocysteine</name>
        <dbReference type="ChEBI" id="CHEBI:58199"/>
    </ligand>
</feature>
<feature type="binding site" evidence="1">
    <location>
        <begin position="431"/>
        <end position="433"/>
    </location>
    <ligand>
        <name>L-methionine</name>
        <dbReference type="ChEBI" id="CHEBI:57844"/>
    </ligand>
</feature>
<feature type="binding site" evidence="1">
    <location>
        <position position="484"/>
    </location>
    <ligand>
        <name>L-homocysteine</name>
        <dbReference type="ChEBI" id="CHEBI:58199"/>
    </ligand>
</feature>
<feature type="binding site" evidence="1">
    <location>
        <position position="484"/>
    </location>
    <ligand>
        <name>L-methionine</name>
        <dbReference type="ChEBI" id="CHEBI:57844"/>
    </ligand>
</feature>
<feature type="binding site" evidence="1">
    <location>
        <begin position="515"/>
        <end position="516"/>
    </location>
    <ligand>
        <name>5-methyltetrahydropteroyltri-L-glutamate</name>
        <dbReference type="ChEBI" id="CHEBI:58207"/>
    </ligand>
</feature>
<feature type="binding site" evidence="1">
    <location>
        <position position="561"/>
    </location>
    <ligand>
        <name>5-methyltetrahydropteroyltri-L-glutamate</name>
        <dbReference type="ChEBI" id="CHEBI:58207"/>
    </ligand>
</feature>
<feature type="binding site" evidence="1">
    <location>
        <position position="599"/>
    </location>
    <ligand>
        <name>L-homocysteine</name>
        <dbReference type="ChEBI" id="CHEBI:58199"/>
    </ligand>
</feature>
<feature type="binding site" evidence="1">
    <location>
        <position position="599"/>
    </location>
    <ligand>
        <name>L-methionine</name>
        <dbReference type="ChEBI" id="CHEBI:57844"/>
    </ligand>
</feature>
<feature type="binding site" evidence="1">
    <location>
        <position position="605"/>
    </location>
    <ligand>
        <name>5-methyltetrahydropteroyltri-L-glutamate</name>
        <dbReference type="ChEBI" id="CHEBI:58207"/>
    </ligand>
</feature>
<feature type="binding site" evidence="1">
    <location>
        <position position="641"/>
    </location>
    <ligand>
        <name>Zn(2+)</name>
        <dbReference type="ChEBI" id="CHEBI:29105"/>
        <note>catalytic</note>
    </ligand>
</feature>
<feature type="binding site" evidence="1">
    <location>
        <position position="643"/>
    </location>
    <ligand>
        <name>Zn(2+)</name>
        <dbReference type="ChEBI" id="CHEBI:29105"/>
        <note>catalytic</note>
    </ligand>
</feature>
<feature type="binding site" evidence="1">
    <location>
        <position position="665"/>
    </location>
    <ligand>
        <name>Zn(2+)</name>
        <dbReference type="ChEBI" id="CHEBI:29105"/>
        <note>catalytic</note>
    </ligand>
</feature>
<feature type="binding site" evidence="1">
    <location>
        <position position="726"/>
    </location>
    <ligand>
        <name>Zn(2+)</name>
        <dbReference type="ChEBI" id="CHEBI:29105"/>
        <note>catalytic</note>
    </ligand>
</feature>
<dbReference type="EC" id="2.1.1.14" evidence="1"/>
<dbReference type="EMBL" id="CP000653">
    <property type="protein sequence ID" value="ABP62622.1"/>
    <property type="molecule type" value="Genomic_DNA"/>
</dbReference>
<dbReference type="RefSeq" id="WP_015960927.1">
    <property type="nucleotide sequence ID" value="NC_009436.1"/>
</dbReference>
<dbReference type="SMR" id="A4WFZ2"/>
<dbReference type="STRING" id="399742.Ent638_3967"/>
<dbReference type="KEGG" id="ent:Ent638_3967"/>
<dbReference type="eggNOG" id="COG0620">
    <property type="taxonomic scope" value="Bacteria"/>
</dbReference>
<dbReference type="HOGENOM" id="CLU_013175_0_0_6"/>
<dbReference type="OrthoDB" id="244285at2"/>
<dbReference type="UniPathway" id="UPA00051">
    <property type="reaction ID" value="UER00082"/>
</dbReference>
<dbReference type="Proteomes" id="UP000000230">
    <property type="component" value="Chromosome"/>
</dbReference>
<dbReference type="GO" id="GO:0003871">
    <property type="term" value="F:5-methyltetrahydropteroyltriglutamate-homocysteine S-methyltransferase activity"/>
    <property type="evidence" value="ECO:0007669"/>
    <property type="project" value="UniProtKB-UniRule"/>
</dbReference>
<dbReference type="GO" id="GO:0008270">
    <property type="term" value="F:zinc ion binding"/>
    <property type="evidence" value="ECO:0007669"/>
    <property type="project" value="InterPro"/>
</dbReference>
<dbReference type="GO" id="GO:0009086">
    <property type="term" value="P:methionine biosynthetic process"/>
    <property type="evidence" value="ECO:0007669"/>
    <property type="project" value="UniProtKB-UniRule"/>
</dbReference>
<dbReference type="GO" id="GO:0032259">
    <property type="term" value="P:methylation"/>
    <property type="evidence" value="ECO:0007669"/>
    <property type="project" value="UniProtKB-KW"/>
</dbReference>
<dbReference type="CDD" id="cd03311">
    <property type="entry name" value="CIMS_C_terminal_like"/>
    <property type="match status" value="1"/>
</dbReference>
<dbReference type="CDD" id="cd03312">
    <property type="entry name" value="CIMS_N_terminal_like"/>
    <property type="match status" value="1"/>
</dbReference>
<dbReference type="FunFam" id="3.20.20.210:FF:000002">
    <property type="entry name" value="5-methyltetrahydropteroyltriglutamate--homocysteine methyltransferase"/>
    <property type="match status" value="1"/>
</dbReference>
<dbReference type="FunFam" id="3.20.20.210:FF:000003">
    <property type="entry name" value="5-methyltetrahydropteroyltriglutamate--homocysteine methyltransferase"/>
    <property type="match status" value="1"/>
</dbReference>
<dbReference type="Gene3D" id="3.20.20.210">
    <property type="match status" value="2"/>
</dbReference>
<dbReference type="HAMAP" id="MF_00172">
    <property type="entry name" value="Meth_synth"/>
    <property type="match status" value="1"/>
</dbReference>
<dbReference type="InterPro" id="IPR013215">
    <property type="entry name" value="Cbl-indep_Met_Synth_N"/>
</dbReference>
<dbReference type="InterPro" id="IPR006276">
    <property type="entry name" value="Cobalamin-indep_Met_synthase"/>
</dbReference>
<dbReference type="InterPro" id="IPR002629">
    <property type="entry name" value="Met_Synth_C/arc"/>
</dbReference>
<dbReference type="InterPro" id="IPR038071">
    <property type="entry name" value="UROD/MetE-like_sf"/>
</dbReference>
<dbReference type="NCBIfam" id="TIGR01371">
    <property type="entry name" value="met_syn_B12ind"/>
    <property type="match status" value="1"/>
</dbReference>
<dbReference type="NCBIfam" id="NF003556">
    <property type="entry name" value="PRK05222.1"/>
    <property type="match status" value="1"/>
</dbReference>
<dbReference type="PANTHER" id="PTHR30519">
    <property type="entry name" value="5-METHYLTETRAHYDROPTEROYLTRIGLUTAMATE--HOMOCYSTEINE METHYLTRANSFERASE"/>
    <property type="match status" value="1"/>
</dbReference>
<dbReference type="Pfam" id="PF08267">
    <property type="entry name" value="Meth_synt_1"/>
    <property type="match status" value="1"/>
</dbReference>
<dbReference type="Pfam" id="PF01717">
    <property type="entry name" value="Meth_synt_2"/>
    <property type="match status" value="1"/>
</dbReference>
<dbReference type="PIRSF" id="PIRSF000382">
    <property type="entry name" value="MeTrfase_B12_ind"/>
    <property type="match status" value="1"/>
</dbReference>
<dbReference type="SUPFAM" id="SSF51726">
    <property type="entry name" value="UROD/MetE-like"/>
    <property type="match status" value="2"/>
</dbReference>
<sequence>MTVINHTLGFPRVGLRRELKKAQESYWAGQSTREDLLAVGRELRARHWDQQKQAGIDLLPVGDFAWYDHVLTTSLLLGNVPARHQNKDGSVDIDTLFRLGRGRAPTGEPAAAAEMTKWFNTNYHYMVPEFVKGQQFKLTWTQLLDEVDEALALGHNIKPVLLGPVTYLWLGKVKGEQFDRLSLLNDILPVYQQVLAELAKRGVEWVQIDEPALVLELPQEWLDAFKPAYDALTGQTKLLLTTYFEGVTPNLDTITALPVQGLHVDLVHGKDEVAELNKRLPSDWLLSAGLVNGRNVWRADLTEKYAQIKDIVGKRDVWVASSCSLLHSPIDLSVETRLDAEVKSWFAFALQKCEELALLRDALNSGDTAKLVEWSAPIQARRHSTRVHNAAVEKRLAAITAKDSQRENAYEVRAEAQRARFNLPAWPTTTIGSFPQTTEIRGLRLDFKKGNLDANNYRTGIAEHIKQAIIEQERLGLDVLVHGEAERNDMVEYFGEHLDGFVFTQNGWVQSYGSRCVKPPVVIGDVSRPEAITVEWAKYAQSLTDKPVKGMLTGPVTILCWSFPREDVTRETIAKQIALALRDEVADLEAAGIGIIQIDEPALREGLPLRRSDWDAYLQWGVEAFRINAAVAKNDTQIHTHMCYCEFNDIMDSIAALDADVITIETSRSDMELLESFEEFDYPNEIGPGVYDIHSPNVPSVEWIEALLAKAAQRIPAERLWVNPDCGLKTRGWPETRAALANMVKAAQNLRQG</sequence>